<sequence>MKAILQVINLVLISVVVIIIPPCGAALGRRKA</sequence>
<dbReference type="EMBL" id="AL590842">
    <property type="status" value="NOT_ANNOTATED_CDS"/>
    <property type="molecule type" value="Genomic_DNA"/>
</dbReference>
<dbReference type="EMBL" id="AE009952">
    <property type="protein sequence ID" value="AAM83926.1"/>
    <property type="molecule type" value="Genomic_DNA"/>
</dbReference>
<dbReference type="EMBL" id="AE017042">
    <property type="status" value="NOT_ANNOTATED_CDS"/>
    <property type="molecule type" value="Genomic_DNA"/>
</dbReference>
<dbReference type="RefSeq" id="WP_002231873.1">
    <property type="nucleotide sequence ID" value="NZ_WUCM01000095.1"/>
</dbReference>
<dbReference type="GeneID" id="57977696"/>
<dbReference type="KEGG" id="ypk:y0335"/>
<dbReference type="HOGENOM" id="CLU_220955_0_0_6"/>
<dbReference type="Proteomes" id="UP000000815">
    <property type="component" value="Chromosome"/>
</dbReference>
<dbReference type="Proteomes" id="UP000001019">
    <property type="component" value="Chromosome"/>
</dbReference>
<dbReference type="Proteomes" id="UP000002490">
    <property type="component" value="Chromosome"/>
</dbReference>
<dbReference type="GO" id="GO:0008652">
    <property type="term" value="P:amino acid biosynthetic process"/>
    <property type="evidence" value="ECO:0007669"/>
    <property type="project" value="UniProtKB-KW"/>
</dbReference>
<dbReference type="GO" id="GO:0009082">
    <property type="term" value="P:branched-chain amino acid biosynthetic process"/>
    <property type="evidence" value="ECO:0007669"/>
    <property type="project" value="UniProtKB-KW"/>
</dbReference>
<dbReference type="InterPro" id="IPR012567">
    <property type="entry name" value="IlvGEDA_leader"/>
</dbReference>
<dbReference type="NCBIfam" id="NF007744">
    <property type="entry name" value="PRK10424.1"/>
    <property type="match status" value="1"/>
</dbReference>
<dbReference type="Pfam" id="PF08046">
    <property type="entry name" value="IlvGEDA_leader"/>
    <property type="match status" value="1"/>
</dbReference>
<gene>
    <name type="primary">ilvL</name>
    <name type="ordered locus">YPO3901.1</name>
    <name type="ordered locus">y0335</name>
    <name type="ordered locus">YP_3146.1</name>
</gene>
<name>LPID_YERPE</name>
<accession>Q8D1L4</accession>
<protein>
    <recommendedName>
        <fullName>ilv operon leader peptide</fullName>
    </recommendedName>
    <alternativeName>
        <fullName>ilvGMEDA operon attenuator peptide</fullName>
    </alternativeName>
</protein>
<feature type="peptide" id="PRO_0000044760" description="ilv operon leader peptide">
    <location>
        <begin position="1"/>
        <end position="32"/>
    </location>
</feature>
<reference key="1">
    <citation type="journal article" date="2001" name="Nature">
        <title>Genome sequence of Yersinia pestis, the causative agent of plague.</title>
        <authorList>
            <person name="Parkhill J."/>
            <person name="Wren B.W."/>
            <person name="Thomson N.R."/>
            <person name="Titball R.W."/>
            <person name="Holden M.T.G."/>
            <person name="Prentice M.B."/>
            <person name="Sebaihia M."/>
            <person name="James K.D."/>
            <person name="Churcher C.M."/>
            <person name="Mungall K.L."/>
            <person name="Baker S."/>
            <person name="Basham D."/>
            <person name="Bentley S.D."/>
            <person name="Brooks K."/>
            <person name="Cerdeno-Tarraga A.-M."/>
            <person name="Chillingworth T."/>
            <person name="Cronin A."/>
            <person name="Davies R.M."/>
            <person name="Davis P."/>
            <person name="Dougan G."/>
            <person name="Feltwell T."/>
            <person name="Hamlin N."/>
            <person name="Holroyd S."/>
            <person name="Jagels K."/>
            <person name="Karlyshev A.V."/>
            <person name="Leather S."/>
            <person name="Moule S."/>
            <person name="Oyston P.C.F."/>
            <person name="Quail M.A."/>
            <person name="Rutherford K.M."/>
            <person name="Simmonds M."/>
            <person name="Skelton J."/>
            <person name="Stevens K."/>
            <person name="Whitehead S."/>
            <person name="Barrell B.G."/>
        </authorList>
    </citation>
    <scope>NUCLEOTIDE SEQUENCE [LARGE SCALE GENOMIC DNA]</scope>
    <source>
        <strain>CO-92 / Biovar Orientalis</strain>
    </source>
</reference>
<reference key="2">
    <citation type="journal article" date="2002" name="J. Bacteriol.">
        <title>Genome sequence of Yersinia pestis KIM.</title>
        <authorList>
            <person name="Deng W."/>
            <person name="Burland V."/>
            <person name="Plunkett G. III"/>
            <person name="Boutin A."/>
            <person name="Mayhew G.F."/>
            <person name="Liss P."/>
            <person name="Perna N.T."/>
            <person name="Rose D.J."/>
            <person name="Mau B."/>
            <person name="Zhou S."/>
            <person name="Schwartz D.C."/>
            <person name="Fetherston J.D."/>
            <person name="Lindler L.E."/>
            <person name="Brubaker R.R."/>
            <person name="Plano G.V."/>
            <person name="Straley S.C."/>
            <person name="McDonough K.A."/>
            <person name="Nilles M.L."/>
            <person name="Matson J.S."/>
            <person name="Blattner F.R."/>
            <person name="Perry R.D."/>
        </authorList>
    </citation>
    <scope>NUCLEOTIDE SEQUENCE [LARGE SCALE GENOMIC DNA]</scope>
    <source>
        <strain>KIM10+ / Biovar Mediaevalis</strain>
    </source>
</reference>
<reference key="3">
    <citation type="journal article" date="2004" name="DNA Res.">
        <title>Complete genome sequence of Yersinia pestis strain 91001, an isolate avirulent to humans.</title>
        <authorList>
            <person name="Song Y."/>
            <person name="Tong Z."/>
            <person name="Wang J."/>
            <person name="Wang L."/>
            <person name="Guo Z."/>
            <person name="Han Y."/>
            <person name="Zhang J."/>
            <person name="Pei D."/>
            <person name="Zhou D."/>
            <person name="Qin H."/>
            <person name="Pang X."/>
            <person name="Han Y."/>
            <person name="Zhai J."/>
            <person name="Li M."/>
            <person name="Cui B."/>
            <person name="Qi Z."/>
            <person name="Jin L."/>
            <person name="Dai R."/>
            <person name="Chen F."/>
            <person name="Li S."/>
            <person name="Ye C."/>
            <person name="Du Z."/>
            <person name="Lin W."/>
            <person name="Wang J."/>
            <person name="Yu J."/>
            <person name="Yang H."/>
            <person name="Wang J."/>
            <person name="Huang P."/>
            <person name="Yang R."/>
        </authorList>
    </citation>
    <scope>NUCLEOTIDE SEQUENCE [LARGE SCALE GENOMIC DNA]</scope>
    <source>
        <strain>91001 / Biovar Mediaevalis</strain>
    </source>
</reference>
<organism>
    <name type="scientific">Yersinia pestis</name>
    <dbReference type="NCBI Taxonomy" id="632"/>
    <lineage>
        <taxon>Bacteria</taxon>
        <taxon>Pseudomonadati</taxon>
        <taxon>Pseudomonadota</taxon>
        <taxon>Gammaproteobacteria</taxon>
        <taxon>Enterobacterales</taxon>
        <taxon>Yersiniaceae</taxon>
        <taxon>Yersinia</taxon>
    </lineage>
</organism>
<proteinExistence type="predicted"/>
<keyword id="KW-0028">Amino-acid biosynthesis</keyword>
<keyword id="KW-0100">Branched-chain amino acid biosynthesis</keyword>
<keyword id="KW-0428">Leader peptide</keyword>
<keyword id="KW-1185">Reference proteome</keyword>